<feature type="chain" id="PRO_0000127204" description="Transcription factor HES-1">
    <location>
        <begin position="1"/>
        <end position="281"/>
    </location>
</feature>
<feature type="domain" description="bHLH" evidence="3">
    <location>
        <begin position="34"/>
        <end position="91"/>
    </location>
</feature>
<feature type="domain" description="Orange" evidence="2">
    <location>
        <begin position="110"/>
        <end position="143"/>
    </location>
</feature>
<feature type="region of interest" description="Disordered" evidence="4">
    <location>
        <begin position="1"/>
        <end position="44"/>
    </location>
</feature>
<feature type="region of interest" description="Disordered" evidence="4">
    <location>
        <begin position="158"/>
        <end position="206"/>
    </location>
</feature>
<feature type="region of interest" description="Disordered" evidence="4">
    <location>
        <begin position="255"/>
        <end position="281"/>
    </location>
</feature>
<feature type="short sequence motif" description="WRPW motif">
    <location>
        <begin position="276"/>
        <end position="279"/>
    </location>
</feature>
<feature type="compositionally biased region" description="Low complexity" evidence="4">
    <location>
        <begin position="10"/>
        <end position="21"/>
    </location>
</feature>
<feature type="compositionally biased region" description="Basic and acidic residues" evidence="4">
    <location>
        <begin position="26"/>
        <end position="35"/>
    </location>
</feature>
<feature type="compositionally biased region" description="Pro residues" evidence="4">
    <location>
        <begin position="164"/>
        <end position="174"/>
    </location>
</feature>
<feature type="compositionally biased region" description="Pro residues" evidence="4">
    <location>
        <begin position="182"/>
        <end position="201"/>
    </location>
</feature>
<feature type="compositionally biased region" description="Polar residues" evidence="4">
    <location>
        <begin position="255"/>
        <end position="272"/>
    </location>
</feature>
<feature type="sequence conflict" description="In Ref. 2; AAA41307." evidence="6" ref="2">
    <original>K</original>
    <variation>N</variation>
    <location>
        <position position="86"/>
    </location>
</feature>
<feature type="sequence conflict" description="In Ref. 2; AAA41307." evidence="6" ref="2">
    <original>R</original>
    <variation>W</variation>
    <location>
        <position position="93"/>
    </location>
</feature>
<accession>Q04666</accession>
<dbReference type="EMBL" id="D13417">
    <property type="protein sequence ID" value="BAA02682.1"/>
    <property type="molecule type" value="mRNA"/>
</dbReference>
<dbReference type="EMBL" id="L04527">
    <property type="protein sequence ID" value="AAA41307.1"/>
    <property type="molecule type" value="mRNA"/>
</dbReference>
<dbReference type="EMBL" id="BC061730">
    <property type="protein sequence ID" value="AAH61730.1"/>
    <property type="molecule type" value="mRNA"/>
</dbReference>
<dbReference type="PIR" id="S36748">
    <property type="entry name" value="S36748"/>
</dbReference>
<dbReference type="RefSeq" id="NP_077336.3">
    <property type="nucleotide sequence ID" value="NM_024360.3"/>
</dbReference>
<dbReference type="BMRB" id="Q04666"/>
<dbReference type="SMR" id="Q04666"/>
<dbReference type="BioGRID" id="248210">
    <property type="interactions" value="8"/>
</dbReference>
<dbReference type="CORUM" id="Q04666"/>
<dbReference type="ELM" id="Q04666"/>
<dbReference type="FunCoup" id="Q04666">
    <property type="interactions" value="569"/>
</dbReference>
<dbReference type="IntAct" id="Q04666">
    <property type="interactions" value="3"/>
</dbReference>
<dbReference type="MINT" id="Q04666"/>
<dbReference type="STRING" id="10116.ENSRNOP00000002346"/>
<dbReference type="ChEMBL" id="CHEMBL4105998"/>
<dbReference type="GlyGen" id="Q04666">
    <property type="glycosylation" value="1 site"/>
</dbReference>
<dbReference type="iPTMnet" id="Q04666"/>
<dbReference type="PhosphoSitePlus" id="Q04666"/>
<dbReference type="PaxDb" id="10116-ENSRNOP00000002346"/>
<dbReference type="Ensembl" id="ENSRNOT00000002346.8">
    <property type="protein sequence ID" value="ENSRNOP00000002346.8"/>
    <property type="gene ID" value="ENSRNOG00000001720.8"/>
</dbReference>
<dbReference type="GeneID" id="29577"/>
<dbReference type="KEGG" id="rno:29577"/>
<dbReference type="UCSC" id="RGD:62081">
    <property type="organism name" value="rat"/>
</dbReference>
<dbReference type="AGR" id="RGD:62081"/>
<dbReference type="CTD" id="3280"/>
<dbReference type="RGD" id="62081">
    <property type="gene designation" value="Hes1"/>
</dbReference>
<dbReference type="eggNOG" id="KOG4304">
    <property type="taxonomic scope" value="Eukaryota"/>
</dbReference>
<dbReference type="GeneTree" id="ENSGT00940000159619"/>
<dbReference type="InParanoid" id="Q04666"/>
<dbReference type="OMA" id="AMNYPAQ"/>
<dbReference type="OrthoDB" id="6085656at2759"/>
<dbReference type="PhylomeDB" id="Q04666"/>
<dbReference type="PRO" id="PR:Q04666"/>
<dbReference type="Proteomes" id="UP000002494">
    <property type="component" value="Chromosome 11"/>
</dbReference>
<dbReference type="GO" id="GO:0000785">
    <property type="term" value="C:chromatin"/>
    <property type="evidence" value="ECO:0000314"/>
    <property type="project" value="RGD"/>
</dbReference>
<dbReference type="GO" id="GO:0005737">
    <property type="term" value="C:cytoplasm"/>
    <property type="evidence" value="ECO:0000266"/>
    <property type="project" value="RGD"/>
</dbReference>
<dbReference type="GO" id="GO:0016363">
    <property type="term" value="C:nuclear matrix"/>
    <property type="evidence" value="ECO:0000314"/>
    <property type="project" value="RGD"/>
</dbReference>
<dbReference type="GO" id="GO:0005654">
    <property type="term" value="C:nucleoplasm"/>
    <property type="evidence" value="ECO:0000304"/>
    <property type="project" value="Reactome"/>
</dbReference>
<dbReference type="GO" id="GO:0005634">
    <property type="term" value="C:nucleus"/>
    <property type="evidence" value="ECO:0000250"/>
    <property type="project" value="UniProtKB"/>
</dbReference>
<dbReference type="GO" id="GO:0032991">
    <property type="term" value="C:protein-containing complex"/>
    <property type="evidence" value="ECO:0000266"/>
    <property type="project" value="RGD"/>
</dbReference>
<dbReference type="GO" id="GO:0003682">
    <property type="term" value="F:chromatin binding"/>
    <property type="evidence" value="ECO:0000314"/>
    <property type="project" value="RGD"/>
</dbReference>
<dbReference type="GO" id="GO:0003677">
    <property type="term" value="F:DNA binding"/>
    <property type="evidence" value="ECO:0000314"/>
    <property type="project" value="RGD"/>
</dbReference>
<dbReference type="GO" id="GO:0000981">
    <property type="term" value="F:DNA-binding transcription factor activity, RNA polymerase II-specific"/>
    <property type="evidence" value="ECO:0000266"/>
    <property type="project" value="RGD"/>
</dbReference>
<dbReference type="GO" id="GO:0001217">
    <property type="term" value="F:DNA-binding transcription repressor activity"/>
    <property type="evidence" value="ECO:0000266"/>
    <property type="project" value="RGD"/>
</dbReference>
<dbReference type="GO" id="GO:0001227">
    <property type="term" value="F:DNA-binding transcription repressor activity, RNA polymerase II-specific"/>
    <property type="evidence" value="ECO:0000250"/>
    <property type="project" value="UniProtKB"/>
</dbReference>
<dbReference type="GO" id="GO:0070888">
    <property type="term" value="F:E-box binding"/>
    <property type="evidence" value="ECO:0000314"/>
    <property type="project" value="RGD"/>
</dbReference>
<dbReference type="GO" id="GO:0042826">
    <property type="term" value="F:histone deacetylase binding"/>
    <property type="evidence" value="ECO:0000266"/>
    <property type="project" value="RGD"/>
</dbReference>
<dbReference type="GO" id="GO:0043398">
    <property type="term" value="F:HLH domain binding"/>
    <property type="evidence" value="ECO:0000266"/>
    <property type="project" value="RGD"/>
</dbReference>
<dbReference type="GO" id="GO:0042802">
    <property type="term" value="F:identical protein binding"/>
    <property type="evidence" value="ECO:0000353"/>
    <property type="project" value="RGD"/>
</dbReference>
<dbReference type="GO" id="GO:0008432">
    <property type="term" value="F:JUN kinase binding"/>
    <property type="evidence" value="ECO:0000353"/>
    <property type="project" value="RGD"/>
</dbReference>
<dbReference type="GO" id="GO:0071820">
    <property type="term" value="F:N-box binding"/>
    <property type="evidence" value="ECO:0000314"/>
    <property type="project" value="RGD"/>
</dbReference>
<dbReference type="GO" id="GO:0042803">
    <property type="term" value="F:protein homodimerization activity"/>
    <property type="evidence" value="ECO:0000250"/>
    <property type="project" value="UniProtKB"/>
</dbReference>
<dbReference type="GO" id="GO:0044877">
    <property type="term" value="F:protein-containing complex binding"/>
    <property type="evidence" value="ECO:0000314"/>
    <property type="project" value="RGD"/>
</dbReference>
<dbReference type="GO" id="GO:0051087">
    <property type="term" value="F:protein-folding chaperone binding"/>
    <property type="evidence" value="ECO:0000266"/>
    <property type="project" value="RGD"/>
</dbReference>
<dbReference type="GO" id="GO:0061629">
    <property type="term" value="F:RNA polymerase II-specific DNA-binding transcription factor binding"/>
    <property type="evidence" value="ECO:0000266"/>
    <property type="project" value="RGD"/>
</dbReference>
<dbReference type="GO" id="GO:0043565">
    <property type="term" value="F:sequence-specific DNA binding"/>
    <property type="evidence" value="ECO:0000314"/>
    <property type="project" value="BHF-UCL"/>
</dbReference>
<dbReference type="GO" id="GO:1990837">
    <property type="term" value="F:sequence-specific double-stranded DNA binding"/>
    <property type="evidence" value="ECO:0000266"/>
    <property type="project" value="RGD"/>
</dbReference>
<dbReference type="GO" id="GO:0001222">
    <property type="term" value="F:transcription corepressor binding"/>
    <property type="evidence" value="ECO:0000353"/>
    <property type="project" value="UniProtKB"/>
</dbReference>
<dbReference type="GO" id="GO:0021984">
    <property type="term" value="P:adenohypophysis development"/>
    <property type="evidence" value="ECO:0000266"/>
    <property type="project" value="RGD"/>
</dbReference>
<dbReference type="GO" id="GO:0035881">
    <property type="term" value="P:amacrine cell differentiation"/>
    <property type="evidence" value="ECO:0000266"/>
    <property type="project" value="RGD"/>
</dbReference>
<dbReference type="GO" id="GO:0035909">
    <property type="term" value="P:aorta morphogenesis"/>
    <property type="evidence" value="ECO:0000266"/>
    <property type="project" value="RGD"/>
</dbReference>
<dbReference type="GO" id="GO:0048844">
    <property type="term" value="P:artery morphogenesis"/>
    <property type="evidence" value="ECO:0000266"/>
    <property type="project" value="RGD"/>
</dbReference>
<dbReference type="GO" id="GO:0035910">
    <property type="term" value="P:ascending aorta morphogenesis"/>
    <property type="evidence" value="ECO:0000266"/>
    <property type="project" value="RGD"/>
</dbReference>
<dbReference type="GO" id="GO:0030509">
    <property type="term" value="P:BMP signaling pathway"/>
    <property type="evidence" value="ECO:0000266"/>
    <property type="project" value="RGD"/>
</dbReference>
<dbReference type="GO" id="GO:0021870">
    <property type="term" value="P:Cajal-Retzius cell differentiation"/>
    <property type="evidence" value="ECO:0000266"/>
    <property type="project" value="RGD"/>
</dbReference>
<dbReference type="GO" id="GO:0061309">
    <property type="term" value="P:cardiac neural crest cell development involved in outflow tract morphogenesis"/>
    <property type="evidence" value="ECO:0000266"/>
    <property type="project" value="RGD"/>
</dbReference>
<dbReference type="GO" id="GO:0007155">
    <property type="term" value="P:cell adhesion"/>
    <property type="evidence" value="ECO:0000266"/>
    <property type="project" value="RGD"/>
</dbReference>
<dbReference type="GO" id="GO:0045165">
    <property type="term" value="P:cell fate commitment"/>
    <property type="evidence" value="ECO:0000266"/>
    <property type="project" value="RGD"/>
</dbReference>
<dbReference type="GO" id="GO:0001709">
    <property type="term" value="P:cell fate determination"/>
    <property type="evidence" value="ECO:0000266"/>
    <property type="project" value="RGD"/>
</dbReference>
<dbReference type="GO" id="GO:0048469">
    <property type="term" value="P:cell maturation"/>
    <property type="evidence" value="ECO:0000266"/>
    <property type="project" value="RGD"/>
</dbReference>
<dbReference type="GO" id="GO:0016477">
    <property type="term" value="P:cell migration"/>
    <property type="evidence" value="ECO:0000266"/>
    <property type="project" value="RGD"/>
</dbReference>
<dbReference type="GO" id="GO:0048667">
    <property type="term" value="P:cell morphogenesis involved in neuron differentiation"/>
    <property type="evidence" value="ECO:0000266"/>
    <property type="project" value="RGD"/>
</dbReference>
<dbReference type="GO" id="GO:0008283">
    <property type="term" value="P:cell population proliferation"/>
    <property type="evidence" value="ECO:0000266"/>
    <property type="project" value="RGD"/>
</dbReference>
<dbReference type="GO" id="GO:0071398">
    <property type="term" value="P:cellular response to fatty acid"/>
    <property type="evidence" value="ECO:0000270"/>
    <property type="project" value="RGD"/>
</dbReference>
<dbReference type="GO" id="GO:0071347">
    <property type="term" value="P:cellular response to interleukin-1"/>
    <property type="evidence" value="ECO:0000270"/>
    <property type="project" value="RGD"/>
</dbReference>
<dbReference type="GO" id="GO:1990090">
    <property type="term" value="P:cellular response to nerve growth factor stimulus"/>
    <property type="evidence" value="ECO:0000315"/>
    <property type="project" value="RGD"/>
</dbReference>
<dbReference type="GO" id="GO:0071356">
    <property type="term" value="P:cellular response to tumor necrosis factor"/>
    <property type="evidence" value="ECO:0000270"/>
    <property type="project" value="RGD"/>
</dbReference>
<dbReference type="GO" id="GO:0090102">
    <property type="term" value="P:cochlea development"/>
    <property type="evidence" value="ECO:0000266"/>
    <property type="project" value="RGD"/>
</dbReference>
<dbReference type="GO" id="GO:0072049">
    <property type="term" value="P:comma-shaped body morphogenesis"/>
    <property type="evidence" value="ECO:0000266"/>
    <property type="project" value="RGD"/>
</dbReference>
<dbReference type="GO" id="GO:0061009">
    <property type="term" value="P:common bile duct development"/>
    <property type="evidence" value="ECO:0000266"/>
    <property type="project" value="RGD"/>
</dbReference>
<dbReference type="GO" id="GO:0003143">
    <property type="term" value="P:embryonic heart tube morphogenesis"/>
    <property type="evidence" value="ECO:0000266"/>
    <property type="project" value="RGD"/>
</dbReference>
<dbReference type="GO" id="GO:0090162">
    <property type="term" value="P:establishment of epithelial cell polarity"/>
    <property type="evidence" value="ECO:0000266"/>
    <property type="project" value="RGD"/>
</dbReference>
<dbReference type="GO" id="GO:0021861">
    <property type="term" value="P:forebrain radial glial cell differentiation"/>
    <property type="evidence" value="ECO:0000314"/>
    <property type="project" value="UniProtKB"/>
</dbReference>
<dbReference type="GO" id="GO:0072012">
    <property type="term" value="P:glomerulus vasculature development"/>
    <property type="evidence" value="ECO:0000266"/>
    <property type="project" value="RGD"/>
</dbReference>
<dbReference type="GO" id="GO:0035315">
    <property type="term" value="P:hair cell differentiation"/>
    <property type="evidence" value="ECO:0000315"/>
    <property type="project" value="RGD"/>
</dbReference>
<dbReference type="GO" id="GO:0021575">
    <property type="term" value="P:hindbrain morphogenesis"/>
    <property type="evidence" value="ECO:0000266"/>
    <property type="project" value="RGD"/>
</dbReference>
<dbReference type="GO" id="GO:0001701">
    <property type="term" value="P:in utero embryonic development"/>
    <property type="evidence" value="ECO:0000266"/>
    <property type="project" value="RGD"/>
</dbReference>
<dbReference type="GO" id="GO:0002085">
    <property type="term" value="P:inhibition of neuroepithelial cell differentiation"/>
    <property type="evidence" value="ECO:0000266"/>
    <property type="project" value="RGD"/>
</dbReference>
<dbReference type="GO" id="GO:0042491">
    <property type="term" value="P:inner ear auditory receptor cell differentiation"/>
    <property type="evidence" value="ECO:0000266"/>
    <property type="project" value="RGD"/>
</dbReference>
<dbReference type="GO" id="GO:0060122">
    <property type="term" value="P:inner ear receptor cell stereocilium organization"/>
    <property type="evidence" value="ECO:0000266"/>
    <property type="project" value="RGD"/>
</dbReference>
<dbReference type="GO" id="GO:0060716">
    <property type="term" value="P:labyrinthine layer blood vessel development"/>
    <property type="evidence" value="ECO:0000266"/>
    <property type="project" value="RGD"/>
</dbReference>
<dbReference type="GO" id="GO:0046331">
    <property type="term" value="P:lateral inhibition"/>
    <property type="evidence" value="ECO:0000266"/>
    <property type="project" value="RGD"/>
</dbReference>
<dbReference type="GO" id="GO:0001889">
    <property type="term" value="P:liver development"/>
    <property type="evidence" value="ECO:0000266"/>
    <property type="project" value="RGD"/>
</dbReference>
<dbReference type="GO" id="GO:0030324">
    <property type="term" value="P:lung development"/>
    <property type="evidence" value="ECO:0000266"/>
    <property type="project" value="RGD"/>
</dbReference>
<dbReference type="GO" id="GO:0072282">
    <property type="term" value="P:metanephric nephron tubule morphogenesis"/>
    <property type="evidence" value="ECO:0000266"/>
    <property type="project" value="RGD"/>
</dbReference>
<dbReference type="GO" id="GO:0030901">
    <property type="term" value="P:midbrain development"/>
    <property type="evidence" value="ECO:0000266"/>
    <property type="project" value="RGD"/>
</dbReference>
<dbReference type="GO" id="GO:0021555">
    <property type="term" value="P:midbrain-hindbrain boundary morphogenesis"/>
    <property type="evidence" value="ECO:0000266"/>
    <property type="project" value="RGD"/>
</dbReference>
<dbReference type="GO" id="GO:1902870">
    <property type="term" value="P:negative regulation of amacrine cell differentiation"/>
    <property type="evidence" value="ECO:0000266"/>
    <property type="project" value="RGD"/>
</dbReference>
<dbReference type="GO" id="GO:0090281">
    <property type="term" value="P:negative regulation of calcium ion import"/>
    <property type="evidence" value="ECO:0000315"/>
    <property type="project" value="RGD"/>
</dbReference>
<dbReference type="GO" id="GO:0045596">
    <property type="term" value="P:negative regulation of cell differentiation"/>
    <property type="evidence" value="ECO:0000266"/>
    <property type="project" value="RGD"/>
</dbReference>
<dbReference type="GO" id="GO:1905934">
    <property type="term" value="P:negative regulation of cell fate determination"/>
    <property type="evidence" value="ECO:0000266"/>
    <property type="project" value="RGD"/>
</dbReference>
<dbReference type="GO" id="GO:0045892">
    <property type="term" value="P:negative regulation of DNA-templated transcription"/>
    <property type="evidence" value="ECO:0000314"/>
    <property type="project" value="UniProtKB"/>
</dbReference>
<dbReference type="GO" id="GO:2000978">
    <property type="term" value="P:negative regulation of forebrain neuron differentiation"/>
    <property type="evidence" value="ECO:0000314"/>
    <property type="project" value="UniProtKB"/>
</dbReference>
<dbReference type="GO" id="GO:0010629">
    <property type="term" value="P:negative regulation of gene expression"/>
    <property type="evidence" value="ECO:0000315"/>
    <property type="project" value="RGD"/>
</dbReference>
<dbReference type="GO" id="GO:0060253">
    <property type="term" value="P:negative regulation of glial cell proliferation"/>
    <property type="evidence" value="ECO:0000250"/>
    <property type="project" value="UniProtKB"/>
</dbReference>
<dbReference type="GO" id="GO:0045608">
    <property type="term" value="P:negative regulation of inner ear auditory receptor cell differentiation"/>
    <property type="evidence" value="ECO:0000266"/>
    <property type="project" value="RGD"/>
</dbReference>
<dbReference type="GO" id="GO:2000981">
    <property type="term" value="P:negative regulation of inner ear receptor cell differentiation"/>
    <property type="evidence" value="ECO:0000266"/>
    <property type="project" value="RGD"/>
</dbReference>
<dbReference type="GO" id="GO:0050768">
    <property type="term" value="P:negative regulation of neurogenesis"/>
    <property type="evidence" value="ECO:0000315"/>
    <property type="project" value="RGD"/>
</dbReference>
<dbReference type="GO" id="GO:0045665">
    <property type="term" value="P:negative regulation of neuron differentiation"/>
    <property type="evidence" value="ECO:0000266"/>
    <property type="project" value="RGD"/>
</dbReference>
<dbReference type="GO" id="GO:0010977">
    <property type="term" value="P:negative regulation of neuron projection development"/>
    <property type="evidence" value="ECO:0000315"/>
    <property type="project" value="RGD"/>
</dbReference>
<dbReference type="GO" id="GO:0048715">
    <property type="term" value="P:negative regulation of oligodendrocyte differentiation"/>
    <property type="evidence" value="ECO:0000315"/>
    <property type="project" value="RGD"/>
</dbReference>
<dbReference type="GO" id="GO:2000227">
    <property type="term" value="P:negative regulation of pancreatic A cell differentiation"/>
    <property type="evidence" value="ECO:0000266"/>
    <property type="project" value="RGD"/>
</dbReference>
<dbReference type="GO" id="GO:2000974">
    <property type="term" value="P:negative regulation of pro-B cell differentiation"/>
    <property type="evidence" value="ECO:0000250"/>
    <property type="project" value="UniProtKB"/>
</dbReference>
<dbReference type="GO" id="GO:2000737">
    <property type="term" value="P:negative regulation of stem cell differentiation"/>
    <property type="evidence" value="ECO:0000266"/>
    <property type="project" value="RGD"/>
</dbReference>
<dbReference type="GO" id="GO:0061106">
    <property type="term" value="P:negative regulation of stomach neuroendocrine cell differentiation"/>
    <property type="evidence" value="ECO:0000266"/>
    <property type="project" value="RGD"/>
</dbReference>
<dbReference type="GO" id="GO:0000122">
    <property type="term" value="P:negative regulation of transcription by RNA polymerase II"/>
    <property type="evidence" value="ECO:0000314"/>
    <property type="project" value="UniProtKB"/>
</dbReference>
<dbReference type="GO" id="GO:0021915">
    <property type="term" value="P:neural tube development"/>
    <property type="evidence" value="ECO:0000266"/>
    <property type="project" value="RGD"/>
</dbReference>
<dbReference type="GO" id="GO:0061101">
    <property type="term" value="P:neuroendocrine cell differentiation"/>
    <property type="evidence" value="ECO:0000266"/>
    <property type="project" value="RGD"/>
</dbReference>
<dbReference type="GO" id="GO:0030182">
    <property type="term" value="P:neuron differentiation"/>
    <property type="evidence" value="ECO:0000270"/>
    <property type="project" value="RGD"/>
</dbReference>
<dbReference type="GO" id="GO:0097150">
    <property type="term" value="P:neuronal stem cell population maintenance"/>
    <property type="evidence" value="ECO:0000314"/>
    <property type="project" value="UniProtKB"/>
</dbReference>
<dbReference type="GO" id="GO:0007219">
    <property type="term" value="P:Notch signaling pathway"/>
    <property type="evidence" value="ECO:0000266"/>
    <property type="project" value="RGD"/>
</dbReference>
<dbReference type="GO" id="GO:0021557">
    <property type="term" value="P:oculomotor nerve development"/>
    <property type="evidence" value="ECO:0000266"/>
    <property type="project" value="RGD"/>
</dbReference>
<dbReference type="GO" id="GO:0003151">
    <property type="term" value="P:outflow tract morphogenesis"/>
    <property type="evidence" value="ECO:0000266"/>
    <property type="project" value="RGD"/>
</dbReference>
<dbReference type="GO" id="GO:0031016">
    <property type="term" value="P:pancreas development"/>
    <property type="evidence" value="ECO:0000266"/>
    <property type="project" value="RGD"/>
</dbReference>
<dbReference type="GO" id="GO:0003310">
    <property type="term" value="P:pancreatic A cell differentiation"/>
    <property type="evidence" value="ECO:0000266"/>
    <property type="project" value="RGD"/>
</dbReference>
<dbReference type="GO" id="GO:0007389">
    <property type="term" value="P:pattern specification process"/>
    <property type="evidence" value="ECO:0000266"/>
    <property type="project" value="RGD"/>
</dbReference>
<dbReference type="GO" id="GO:0061626">
    <property type="term" value="P:pharyngeal arch artery morphogenesis"/>
    <property type="evidence" value="ECO:0000266"/>
    <property type="project" value="RGD"/>
</dbReference>
<dbReference type="GO" id="GO:0021983">
    <property type="term" value="P:pituitary gland development"/>
    <property type="evidence" value="ECO:0000266"/>
    <property type="project" value="RGD"/>
</dbReference>
<dbReference type="GO" id="GO:0048711">
    <property type="term" value="P:positive regulation of astrocyte differentiation"/>
    <property type="evidence" value="ECO:0000250"/>
    <property type="project" value="UniProtKB"/>
</dbReference>
<dbReference type="GO" id="GO:0030513">
    <property type="term" value="P:positive regulation of BMP signaling pathway"/>
    <property type="evidence" value="ECO:0000266"/>
    <property type="project" value="RGD"/>
</dbReference>
<dbReference type="GO" id="GO:0008284">
    <property type="term" value="P:positive regulation of cell population proliferation"/>
    <property type="evidence" value="ECO:0000266"/>
    <property type="project" value="RGD"/>
</dbReference>
<dbReference type="GO" id="GO:0043388">
    <property type="term" value="P:positive regulation of DNA binding"/>
    <property type="evidence" value="ECO:0000250"/>
    <property type="project" value="UniProtKB"/>
</dbReference>
<dbReference type="GO" id="GO:0045893">
    <property type="term" value="P:positive regulation of DNA-templated transcription"/>
    <property type="evidence" value="ECO:0000266"/>
    <property type="project" value="RGD"/>
</dbReference>
<dbReference type="GO" id="GO:0010628">
    <property type="term" value="P:positive regulation of gene expression"/>
    <property type="evidence" value="ECO:0000315"/>
    <property type="project" value="RGD"/>
</dbReference>
<dbReference type="GO" id="GO:0045687">
    <property type="term" value="P:positive regulation of glial cell differentiation"/>
    <property type="evidence" value="ECO:0000315"/>
    <property type="project" value="RGD"/>
</dbReference>
<dbReference type="GO" id="GO:0045977">
    <property type="term" value="P:positive regulation of mitotic cell cycle, embryonic"/>
    <property type="evidence" value="ECO:0000266"/>
    <property type="project" value="RGD"/>
</dbReference>
<dbReference type="GO" id="GO:0045747">
    <property type="term" value="P:positive regulation of Notch signaling pathway"/>
    <property type="evidence" value="ECO:0000266"/>
    <property type="project" value="RGD"/>
</dbReference>
<dbReference type="GO" id="GO:0046427">
    <property type="term" value="P:positive regulation of receptor signaling pathway via JAK-STAT"/>
    <property type="evidence" value="ECO:0000250"/>
    <property type="project" value="UniProtKB"/>
</dbReference>
<dbReference type="GO" id="GO:0042102">
    <property type="term" value="P:positive regulation of T cell proliferation"/>
    <property type="evidence" value="ECO:0000266"/>
    <property type="project" value="RGD"/>
</dbReference>
<dbReference type="GO" id="GO:0045944">
    <property type="term" value="P:positive regulation of transcription by RNA polymerase II"/>
    <property type="evidence" value="ECO:0000266"/>
    <property type="project" value="RGD"/>
</dbReference>
<dbReference type="GO" id="GO:0042531">
    <property type="term" value="P:positive regulation of tyrosine phosphorylation of STAT protein"/>
    <property type="evidence" value="ECO:0000250"/>
    <property type="project" value="UniProtKB"/>
</dbReference>
<dbReference type="GO" id="GO:0065003">
    <property type="term" value="P:protein-containing complex assembly"/>
    <property type="evidence" value="ECO:0000250"/>
    <property type="project" value="UniProtKB"/>
</dbReference>
<dbReference type="GO" id="GO:0050678">
    <property type="term" value="P:regulation of epithelial cell proliferation"/>
    <property type="evidence" value="ECO:0000266"/>
    <property type="project" value="RGD"/>
</dbReference>
<dbReference type="GO" id="GO:0045598">
    <property type="term" value="P:regulation of fat cell differentiation"/>
    <property type="evidence" value="ECO:0000266"/>
    <property type="project" value="RGD"/>
</dbReference>
<dbReference type="GO" id="GO:0050767">
    <property type="term" value="P:regulation of neurogenesis"/>
    <property type="evidence" value="ECO:0000266"/>
    <property type="project" value="RGD"/>
</dbReference>
<dbReference type="GO" id="GO:0045664">
    <property type="term" value="P:regulation of neuron differentiation"/>
    <property type="evidence" value="ECO:0000266"/>
    <property type="project" value="RGD"/>
</dbReference>
<dbReference type="GO" id="GO:0043254">
    <property type="term" value="P:regulation of protein-containing complex assembly"/>
    <property type="evidence" value="ECO:0000314"/>
    <property type="project" value="RGD"/>
</dbReference>
<dbReference type="GO" id="GO:0046425">
    <property type="term" value="P:regulation of receptor signaling pathway via JAK-STAT"/>
    <property type="evidence" value="ECO:0000250"/>
    <property type="project" value="UniProtKB"/>
</dbReference>
<dbReference type="GO" id="GO:0003266">
    <property type="term" value="P:regulation of secondary heart field cardioblast proliferation"/>
    <property type="evidence" value="ECO:0000266"/>
    <property type="project" value="RGD"/>
</dbReference>
<dbReference type="GO" id="GO:0048505">
    <property type="term" value="P:regulation of timing of cell differentiation"/>
    <property type="evidence" value="ECO:0000266"/>
    <property type="project" value="RGD"/>
</dbReference>
<dbReference type="GO" id="GO:0060164">
    <property type="term" value="P:regulation of timing of neuron differentiation"/>
    <property type="evidence" value="ECO:0000266"/>
    <property type="project" value="RGD"/>
</dbReference>
<dbReference type="GO" id="GO:0006357">
    <property type="term" value="P:regulation of transcription by RNA polymerase II"/>
    <property type="evidence" value="ECO:0000266"/>
    <property type="project" value="RGD"/>
</dbReference>
<dbReference type="GO" id="GO:0072141">
    <property type="term" value="P:renal interstitial fibroblast development"/>
    <property type="evidence" value="ECO:0000266"/>
    <property type="project" value="RGD"/>
</dbReference>
<dbReference type="GO" id="GO:0043279">
    <property type="term" value="P:response to alkaloid"/>
    <property type="evidence" value="ECO:0000270"/>
    <property type="project" value="RGD"/>
</dbReference>
<dbReference type="GO" id="GO:1904010">
    <property type="term" value="P:response to Aroclor 1254"/>
    <property type="evidence" value="ECO:0000270"/>
    <property type="project" value="RGD"/>
</dbReference>
<dbReference type="GO" id="GO:0097066">
    <property type="term" value="P:response to thyroid hormone"/>
    <property type="evidence" value="ECO:0000270"/>
    <property type="project" value="RGD"/>
</dbReference>
<dbReference type="GO" id="GO:0009615">
    <property type="term" value="P:response to virus"/>
    <property type="evidence" value="ECO:0007669"/>
    <property type="project" value="Ensembl"/>
</dbReference>
<dbReference type="GO" id="GO:0072050">
    <property type="term" value="P:S-shaped body morphogenesis"/>
    <property type="evidence" value="ECO:0000266"/>
    <property type="project" value="RGD"/>
</dbReference>
<dbReference type="GO" id="GO:0007224">
    <property type="term" value="P:smoothened signaling pathway"/>
    <property type="evidence" value="ECO:0000266"/>
    <property type="project" value="RGD"/>
</dbReference>
<dbReference type="GO" id="GO:0035019">
    <property type="term" value="P:somatic stem cell population maintenance"/>
    <property type="evidence" value="ECO:0000266"/>
    <property type="project" value="RGD"/>
</dbReference>
<dbReference type="GO" id="GO:0061102">
    <property type="term" value="P:stomach neuroendocrine cell differentiation"/>
    <property type="evidence" value="ECO:0000266"/>
    <property type="project" value="RGD"/>
</dbReference>
<dbReference type="GO" id="GO:0042098">
    <property type="term" value="P:T cell proliferation"/>
    <property type="evidence" value="ECO:0000266"/>
    <property type="project" value="RGD"/>
</dbReference>
<dbReference type="GO" id="GO:0021537">
    <property type="term" value="P:telencephalon development"/>
    <property type="evidence" value="ECO:0000266"/>
    <property type="project" value="RGD"/>
</dbReference>
<dbReference type="GO" id="GO:0048538">
    <property type="term" value="P:thymus development"/>
    <property type="evidence" value="ECO:0000266"/>
    <property type="project" value="RGD"/>
</dbReference>
<dbReference type="GO" id="GO:0021558">
    <property type="term" value="P:trochlear nerve development"/>
    <property type="evidence" value="ECO:0000266"/>
    <property type="project" value="RGD"/>
</dbReference>
<dbReference type="GO" id="GO:0060675">
    <property type="term" value="P:ureteric bud morphogenesis"/>
    <property type="evidence" value="ECO:0000266"/>
    <property type="project" value="RGD"/>
</dbReference>
<dbReference type="GO" id="GO:0097084">
    <property type="term" value="P:vascular associated smooth muscle cell development"/>
    <property type="evidence" value="ECO:0000266"/>
    <property type="project" value="RGD"/>
</dbReference>
<dbReference type="GO" id="GO:0003281">
    <property type="term" value="P:ventricular septum development"/>
    <property type="evidence" value="ECO:0000266"/>
    <property type="project" value="RGD"/>
</dbReference>
<dbReference type="GO" id="GO:0060412">
    <property type="term" value="P:ventricular septum morphogenesis"/>
    <property type="evidence" value="ECO:0000266"/>
    <property type="project" value="RGD"/>
</dbReference>
<dbReference type="CDD" id="cd11459">
    <property type="entry name" value="bHLH-O_HES1_4"/>
    <property type="match status" value="1"/>
</dbReference>
<dbReference type="FunFam" id="4.10.280.10:FF:000009">
    <property type="entry name" value="Transcription factor HES-1"/>
    <property type="match status" value="1"/>
</dbReference>
<dbReference type="Gene3D" id="6.10.250.980">
    <property type="match status" value="1"/>
</dbReference>
<dbReference type="Gene3D" id="4.10.280.10">
    <property type="entry name" value="Helix-loop-helix DNA-binding domain"/>
    <property type="match status" value="1"/>
</dbReference>
<dbReference type="InterPro" id="IPR011598">
    <property type="entry name" value="bHLH_dom"/>
</dbReference>
<dbReference type="InterPro" id="IPR050370">
    <property type="entry name" value="HES_HEY"/>
</dbReference>
<dbReference type="InterPro" id="IPR036638">
    <property type="entry name" value="HLH_DNA-bd_sf"/>
</dbReference>
<dbReference type="InterPro" id="IPR003650">
    <property type="entry name" value="Orange_dom"/>
</dbReference>
<dbReference type="PANTHER" id="PTHR10985">
    <property type="entry name" value="BASIC HELIX-LOOP-HELIX TRANSCRIPTION FACTOR, HES-RELATED"/>
    <property type="match status" value="1"/>
</dbReference>
<dbReference type="Pfam" id="PF07527">
    <property type="entry name" value="Hairy_orange"/>
    <property type="match status" value="1"/>
</dbReference>
<dbReference type="Pfam" id="PF00010">
    <property type="entry name" value="HLH"/>
    <property type="match status" value="1"/>
</dbReference>
<dbReference type="SMART" id="SM00353">
    <property type="entry name" value="HLH"/>
    <property type="match status" value="1"/>
</dbReference>
<dbReference type="SMART" id="SM00511">
    <property type="entry name" value="ORANGE"/>
    <property type="match status" value="1"/>
</dbReference>
<dbReference type="SUPFAM" id="SSF47459">
    <property type="entry name" value="HLH, helix-loop-helix DNA-binding domain"/>
    <property type="match status" value="1"/>
</dbReference>
<dbReference type="SUPFAM" id="SSF158457">
    <property type="entry name" value="Orange domain-like"/>
    <property type="match status" value="1"/>
</dbReference>
<dbReference type="PROSITE" id="PS50888">
    <property type="entry name" value="BHLH"/>
    <property type="match status" value="1"/>
</dbReference>
<dbReference type="PROSITE" id="PS51054">
    <property type="entry name" value="ORANGE"/>
    <property type="match status" value="1"/>
</dbReference>
<proteinExistence type="evidence at protein level"/>
<evidence type="ECO:0000250" key="1"/>
<evidence type="ECO:0000255" key="2">
    <source>
        <dbReference type="PROSITE-ProRule" id="PRU00380"/>
    </source>
</evidence>
<evidence type="ECO:0000255" key="3">
    <source>
        <dbReference type="PROSITE-ProRule" id="PRU00981"/>
    </source>
</evidence>
<evidence type="ECO:0000256" key="4">
    <source>
        <dbReference type="SAM" id="MobiDB-lite"/>
    </source>
</evidence>
<evidence type="ECO:0000269" key="5">
    <source>
    </source>
</evidence>
<evidence type="ECO:0000305" key="6"/>
<comment type="function">
    <text evidence="1 5">Transcriptional repressor of genes that require a bHLH protein for their transcription. May act as a negative regulator of myogenesis by inhibiting the functions of MYOD1 and ASH1. Binds DNA on N-box motifs: 5'-CACNAG-3' with high affinity and on E-box motifs: 5'-CANNTG-3' with low affinity. May play a role in a functional FA core complex response to DNA cross-link damage, being required for the stability and nuclear localization of FA core complex proteins, as well as for FANCD2 monoubiquitination in response to DNA damage (By similarity).</text>
</comment>
<comment type="subunit">
    <text evidence="1">Interacts with SIRT1. Interacts weakly with TLE2. Interacts with HES6 (By similarity). Transcription repression requires formation of a complex with a corepressor protein of the Groucho/TLE family. Interacts (via WPRW motif) with TLE1. Interacts with an FA complex, composed of FANCA, FANCF, FANCG and FANCL, but not of FANCC, nor FANCE (By similarity).</text>
</comment>
<comment type="subcellular location">
    <subcellularLocation>
        <location>Nucleus</location>
    </subcellularLocation>
</comment>
<comment type="tissue specificity">
    <text>Present in all tissues examined but highest in epithelial cells and in mesoderm-derived tissues such as embryonal muscle cells.</text>
</comment>
<comment type="domain">
    <text evidence="5">Has a particular type of basic domain (presence of a helix-interrupting proline) that binds to the N-box (CACNAG), rather than the canonical E-box (CANNTG).</text>
</comment>
<comment type="domain">
    <text evidence="5">The C-terminal WRPW motif is a transcriptional repression domain necessary for the interaction with Groucho/TLE family members, transcriptional corepressors recruited to specific target DNA by Hairy-related proteins.</text>
</comment>
<comment type="domain">
    <text evidence="1">The bHLH, as well as cooperation between the central Orange domain and the C-terminal WRPW motif, is required for transcriptional repressor activity.</text>
</comment>
<keyword id="KW-0238">DNA-binding</keyword>
<keyword id="KW-0539">Nucleus</keyword>
<keyword id="KW-1185">Reference proteome</keyword>
<keyword id="KW-0678">Repressor</keyword>
<keyword id="KW-0804">Transcription</keyword>
<keyword id="KW-0805">Transcription regulation</keyword>
<sequence>MPADIMEKNSSSPVAATPASVNTTPDKPKTASEHRKSSKPIMEKRRRARINESLSQLKTLILDALKKDSSRHSKLEKADILEMTVKHLRNLQRAQMTAALSTDPSVLGKYRAGFSECMNEVTRFLSTCEGVNTEVRTRLLGHLANCMTQINAMTYPGQAHPALQAPPPPPPSGPGGPQHAPFAPPPPLVPIPGGAAPPPGSAPCKLGSQAGEAAKVFGGFQVVPAPDGQFAFLIPNGAFAHSGPVIPVYTSNSGTSVGPNAVSPSSGSSLTADSMWRPWRN</sequence>
<reference key="1">
    <citation type="journal article" date="1992" name="Genes Dev.">
        <title>Two mammalian helix-loop-helix factors structurally related to Drosophila hairy and Enhancer of split.</title>
        <authorList>
            <person name="Sasai Y."/>
            <person name="Kageyama R."/>
            <person name="Tagawa Y."/>
            <person name="Shigemoto R."/>
            <person name="Nakanishi S."/>
        </authorList>
    </citation>
    <scope>NUCLEOTIDE SEQUENCE [MRNA]</scope>
    <source>
        <strain>Sprague-Dawley</strain>
        <tissue>Embryo</tissue>
    </source>
</reference>
<reference key="2">
    <citation type="journal article" date="1993" name="Mol. Cell. Biol.">
        <title>A rat gene with sequence homology to the Drosophila gene hairy is rapidly induced by growth factors known to influence neuronal differentiation.</title>
        <authorList>
            <person name="Feder J.N."/>
            <person name="Jan L.Y."/>
            <person name="Jan Y.-N."/>
        </authorList>
    </citation>
    <scope>NUCLEOTIDE SEQUENCE [MRNA]</scope>
</reference>
<reference key="3">
    <citation type="journal article" date="2004" name="Genome Res.">
        <title>The status, quality, and expansion of the NIH full-length cDNA project: the Mammalian Gene Collection (MGC).</title>
        <authorList>
            <consortium name="The MGC Project Team"/>
        </authorList>
    </citation>
    <scope>NUCLEOTIDE SEQUENCE [LARGE SCALE MRNA]</scope>
    <source>
        <tissue>Prostate</tissue>
    </source>
</reference>
<reference key="4">
    <citation type="journal article" date="1996" name="Biochem. Biophys. Res. Commun.">
        <title>Molecular interaction between TLE1 and the carboxyl-terminal domain of HES-1 containing the WRPW motif.</title>
        <authorList>
            <person name="Grbavec D."/>
            <person name="Stifani S."/>
        </authorList>
    </citation>
    <scope>INTERACTION WITH TLE1</scope>
</reference>
<reference key="5">
    <citation type="journal article" date="1996" name="Mol. Cell. Biol.">
        <title>The WRPW motif of the hairy-related basic helix-loop-helix repressor proteins acts as a 4-amino-acid transcription repression and protein-protein interaction domain.</title>
        <authorList>
            <person name="Fisher A.L."/>
            <person name="Ohsako S."/>
            <person name="Caudy M."/>
        </authorList>
    </citation>
    <scope>FUNCTION</scope>
    <scope>INTERACTION WITH TLE1</scope>
    <scope>DOMAIN WRPW MOTIF</scope>
</reference>
<gene>
    <name type="primary">Hes1</name>
    <name type="synonym">Hes-1</name>
    <name type="synonym">Hl</name>
</gene>
<organism>
    <name type="scientific">Rattus norvegicus</name>
    <name type="common">Rat</name>
    <dbReference type="NCBI Taxonomy" id="10116"/>
    <lineage>
        <taxon>Eukaryota</taxon>
        <taxon>Metazoa</taxon>
        <taxon>Chordata</taxon>
        <taxon>Craniata</taxon>
        <taxon>Vertebrata</taxon>
        <taxon>Euteleostomi</taxon>
        <taxon>Mammalia</taxon>
        <taxon>Eutheria</taxon>
        <taxon>Euarchontoglires</taxon>
        <taxon>Glires</taxon>
        <taxon>Rodentia</taxon>
        <taxon>Myomorpha</taxon>
        <taxon>Muroidea</taxon>
        <taxon>Muridae</taxon>
        <taxon>Murinae</taxon>
        <taxon>Rattus</taxon>
    </lineage>
</organism>
<protein>
    <recommendedName>
        <fullName>Transcription factor HES-1</fullName>
    </recommendedName>
    <alternativeName>
        <fullName>Hairy and enhancer of split 1</fullName>
    </alternativeName>
    <alternativeName>
        <fullName>Hairy-like protein</fullName>
    </alternativeName>
    <alternativeName>
        <fullName>RHL</fullName>
    </alternativeName>
</protein>
<name>HES1_RAT</name>